<evidence type="ECO:0000255" key="1">
    <source>
        <dbReference type="HAMAP-Rule" id="MF_01445"/>
    </source>
</evidence>
<organism>
    <name type="scientific">Salmonella paratyphi B (strain ATCC BAA-1250 / SPB7)</name>
    <dbReference type="NCBI Taxonomy" id="1016998"/>
    <lineage>
        <taxon>Bacteria</taxon>
        <taxon>Pseudomonadati</taxon>
        <taxon>Pseudomonadota</taxon>
        <taxon>Gammaproteobacteria</taxon>
        <taxon>Enterobacterales</taxon>
        <taxon>Enterobacteriaceae</taxon>
        <taxon>Salmonella</taxon>
    </lineage>
</organism>
<protein>
    <recommendedName>
        <fullName evidence="1">tRNA N6-adenosine threonylcarbamoyltransferase</fullName>
        <ecNumber evidence="1">2.3.1.234</ecNumber>
    </recommendedName>
    <alternativeName>
        <fullName evidence="1">N6-L-threonylcarbamoyladenine synthase</fullName>
        <shortName evidence="1">t(6)A synthase</shortName>
    </alternativeName>
    <alternativeName>
        <fullName evidence="1">t(6)A37 threonylcarbamoyladenosine biosynthesis protein TsaD</fullName>
    </alternativeName>
    <alternativeName>
        <fullName evidence="1">tRNA threonylcarbamoyladenosine biosynthesis protein TsaD</fullName>
    </alternativeName>
</protein>
<sequence length="337" mass="35998">MRVLGIETSCDETGIAIYDDKKGLLANQLYSQVKLHADYGGVVPELASRDHVRKTVPLIQAALKEAGLTASDIDAVAYTAGPGLVGALLVGATVGRSLAFAWNVPAIPVHHMEGHLLAPMLEDNPPEFPFVALLVSGGHTQLISVTGIGQYELLGESIDDAAGEAFDKTAKLLGLDYPGGPMLSKMASQGTAGRFVFPRPMTDRPGLDFSFSGLKTFAANTIRSNGDDEQTRADIARAFEDAVVDTLMIKCKRALESTGFKRLVMAGGVSANRTLRAKLAEMMQKRRGEVFYARPEFCTDNGAMIAYAGMVRFKAGVTADLGVTVRPRWPLAELPAA</sequence>
<proteinExistence type="inferred from homology"/>
<name>TSAD_SALPB</name>
<reference key="1">
    <citation type="submission" date="2007-11" db="EMBL/GenBank/DDBJ databases">
        <authorList>
            <consortium name="The Salmonella enterica serovar Paratyphi B Genome Sequencing Project"/>
            <person name="McClelland M."/>
            <person name="Sanderson E.K."/>
            <person name="Porwollik S."/>
            <person name="Spieth J."/>
            <person name="Clifton W.S."/>
            <person name="Fulton R."/>
            <person name="Cordes M."/>
            <person name="Wollam A."/>
            <person name="Shah N."/>
            <person name="Pepin K."/>
            <person name="Bhonagiri V."/>
            <person name="Nash W."/>
            <person name="Johnson M."/>
            <person name="Thiruvilangam P."/>
            <person name="Wilson R."/>
        </authorList>
    </citation>
    <scope>NUCLEOTIDE SEQUENCE [LARGE SCALE GENOMIC DNA]</scope>
    <source>
        <strain>ATCC BAA-1250 / SPB7</strain>
    </source>
</reference>
<keyword id="KW-0012">Acyltransferase</keyword>
<keyword id="KW-0963">Cytoplasm</keyword>
<keyword id="KW-0408">Iron</keyword>
<keyword id="KW-0479">Metal-binding</keyword>
<keyword id="KW-0808">Transferase</keyword>
<keyword id="KW-0819">tRNA processing</keyword>
<feature type="chain" id="PRO_1000087487" description="tRNA N6-adenosine threonylcarbamoyltransferase">
    <location>
        <begin position="1"/>
        <end position="337"/>
    </location>
</feature>
<feature type="binding site" evidence="1">
    <location>
        <position position="111"/>
    </location>
    <ligand>
        <name>Fe cation</name>
        <dbReference type="ChEBI" id="CHEBI:24875"/>
    </ligand>
</feature>
<feature type="binding site" evidence="1">
    <location>
        <position position="115"/>
    </location>
    <ligand>
        <name>Fe cation</name>
        <dbReference type="ChEBI" id="CHEBI:24875"/>
    </ligand>
</feature>
<feature type="binding site" evidence="1">
    <location>
        <begin position="134"/>
        <end position="138"/>
    </location>
    <ligand>
        <name>substrate</name>
    </ligand>
</feature>
<feature type="binding site" evidence="1">
    <location>
        <position position="167"/>
    </location>
    <ligand>
        <name>substrate</name>
    </ligand>
</feature>
<feature type="binding site" evidence="1">
    <location>
        <position position="180"/>
    </location>
    <ligand>
        <name>substrate</name>
    </ligand>
</feature>
<feature type="binding site" evidence="1">
    <location>
        <position position="272"/>
    </location>
    <ligand>
        <name>substrate</name>
    </ligand>
</feature>
<feature type="binding site" evidence="1">
    <location>
        <position position="300"/>
    </location>
    <ligand>
        <name>Fe cation</name>
        <dbReference type="ChEBI" id="CHEBI:24875"/>
    </ligand>
</feature>
<dbReference type="EC" id="2.3.1.234" evidence="1"/>
<dbReference type="EMBL" id="CP000886">
    <property type="protein sequence ID" value="ABX69333.1"/>
    <property type="molecule type" value="Genomic_DNA"/>
</dbReference>
<dbReference type="RefSeq" id="WP_001264391.1">
    <property type="nucleotide sequence ID" value="NC_010102.1"/>
</dbReference>
<dbReference type="SMR" id="A9N5Y7"/>
<dbReference type="KEGG" id="spq:SPAB_04004"/>
<dbReference type="PATRIC" id="fig|1016998.12.peg.3775"/>
<dbReference type="HOGENOM" id="CLU_023208_0_0_6"/>
<dbReference type="BioCyc" id="SENT1016998:SPAB_RS16260-MONOMER"/>
<dbReference type="Proteomes" id="UP000008556">
    <property type="component" value="Chromosome"/>
</dbReference>
<dbReference type="GO" id="GO:0005737">
    <property type="term" value="C:cytoplasm"/>
    <property type="evidence" value="ECO:0007669"/>
    <property type="project" value="UniProtKB-SubCell"/>
</dbReference>
<dbReference type="GO" id="GO:0005506">
    <property type="term" value="F:iron ion binding"/>
    <property type="evidence" value="ECO:0007669"/>
    <property type="project" value="UniProtKB-UniRule"/>
</dbReference>
<dbReference type="GO" id="GO:0061711">
    <property type="term" value="F:N(6)-L-threonylcarbamoyladenine synthase activity"/>
    <property type="evidence" value="ECO:0007669"/>
    <property type="project" value="UniProtKB-EC"/>
</dbReference>
<dbReference type="GO" id="GO:0002949">
    <property type="term" value="P:tRNA threonylcarbamoyladenosine modification"/>
    <property type="evidence" value="ECO:0007669"/>
    <property type="project" value="UniProtKB-UniRule"/>
</dbReference>
<dbReference type="CDD" id="cd24097">
    <property type="entry name" value="ASKHA_NBD_TsaD-like"/>
    <property type="match status" value="1"/>
</dbReference>
<dbReference type="FunFam" id="3.30.420.40:FF:000031">
    <property type="entry name" value="tRNA N6-adenosine threonylcarbamoyltransferase"/>
    <property type="match status" value="1"/>
</dbReference>
<dbReference type="Gene3D" id="3.30.420.40">
    <property type="match status" value="2"/>
</dbReference>
<dbReference type="HAMAP" id="MF_01445">
    <property type="entry name" value="TsaD"/>
    <property type="match status" value="1"/>
</dbReference>
<dbReference type="InterPro" id="IPR043129">
    <property type="entry name" value="ATPase_NBD"/>
</dbReference>
<dbReference type="InterPro" id="IPR000905">
    <property type="entry name" value="Gcp-like_dom"/>
</dbReference>
<dbReference type="InterPro" id="IPR017861">
    <property type="entry name" value="KAE1/TsaD"/>
</dbReference>
<dbReference type="InterPro" id="IPR017860">
    <property type="entry name" value="Peptidase_M22_CS"/>
</dbReference>
<dbReference type="InterPro" id="IPR022450">
    <property type="entry name" value="TsaD"/>
</dbReference>
<dbReference type="NCBIfam" id="TIGR00329">
    <property type="entry name" value="gcp_kae1"/>
    <property type="match status" value="1"/>
</dbReference>
<dbReference type="NCBIfam" id="TIGR03723">
    <property type="entry name" value="T6A_TsaD_YgjD"/>
    <property type="match status" value="1"/>
</dbReference>
<dbReference type="PANTHER" id="PTHR11735">
    <property type="entry name" value="TRNA N6-ADENOSINE THREONYLCARBAMOYLTRANSFERASE"/>
    <property type="match status" value="1"/>
</dbReference>
<dbReference type="PANTHER" id="PTHR11735:SF6">
    <property type="entry name" value="TRNA N6-ADENOSINE THREONYLCARBAMOYLTRANSFERASE, MITOCHONDRIAL"/>
    <property type="match status" value="1"/>
</dbReference>
<dbReference type="Pfam" id="PF00814">
    <property type="entry name" value="TsaD"/>
    <property type="match status" value="1"/>
</dbReference>
<dbReference type="PRINTS" id="PR00789">
    <property type="entry name" value="OSIALOPTASE"/>
</dbReference>
<dbReference type="SUPFAM" id="SSF53067">
    <property type="entry name" value="Actin-like ATPase domain"/>
    <property type="match status" value="1"/>
</dbReference>
<dbReference type="PROSITE" id="PS01016">
    <property type="entry name" value="GLYCOPROTEASE"/>
    <property type="match status" value="1"/>
</dbReference>
<gene>
    <name evidence="1" type="primary">tsaD</name>
    <name type="synonym">gcp</name>
    <name type="ordered locus">SPAB_04004</name>
</gene>
<accession>A9N5Y7</accession>
<comment type="function">
    <text evidence="1">Required for the formation of a threonylcarbamoyl group on adenosine at position 37 (t(6)A37) in tRNAs that read codons beginning with adenine. Is involved in the transfer of the threonylcarbamoyl moiety of threonylcarbamoyl-AMP (TC-AMP) to the N6 group of A37, together with TsaE and TsaB. TsaD likely plays a direct catalytic role in this reaction.</text>
</comment>
<comment type="catalytic activity">
    <reaction evidence="1">
        <text>L-threonylcarbamoyladenylate + adenosine(37) in tRNA = N(6)-L-threonylcarbamoyladenosine(37) in tRNA + AMP + H(+)</text>
        <dbReference type="Rhea" id="RHEA:37059"/>
        <dbReference type="Rhea" id="RHEA-COMP:10162"/>
        <dbReference type="Rhea" id="RHEA-COMP:10163"/>
        <dbReference type="ChEBI" id="CHEBI:15378"/>
        <dbReference type="ChEBI" id="CHEBI:73682"/>
        <dbReference type="ChEBI" id="CHEBI:74411"/>
        <dbReference type="ChEBI" id="CHEBI:74418"/>
        <dbReference type="ChEBI" id="CHEBI:456215"/>
        <dbReference type="EC" id="2.3.1.234"/>
    </reaction>
</comment>
<comment type="cofactor">
    <cofactor evidence="1">
        <name>Fe(2+)</name>
        <dbReference type="ChEBI" id="CHEBI:29033"/>
    </cofactor>
    <text evidence="1">Binds 1 Fe(2+) ion per subunit.</text>
</comment>
<comment type="subcellular location">
    <subcellularLocation>
        <location evidence="1">Cytoplasm</location>
    </subcellularLocation>
</comment>
<comment type="similarity">
    <text evidence="1">Belongs to the KAE1 / TsaD family.</text>
</comment>